<evidence type="ECO:0000250" key="1"/>
<evidence type="ECO:0000269" key="2">
    <source>
    </source>
</evidence>
<evidence type="ECO:0000305" key="3"/>
<feature type="chain" id="PRO_0000300839" description="Chalcone--flavanone isomerase">
    <location>
        <begin position="1"/>
        <end position="231"/>
    </location>
</feature>
<feature type="binding site" evidence="1">
    <location>
        <position position="46"/>
    </location>
    <ligand>
        <name>substrate</name>
    </ligand>
</feature>
<feature type="binding site" evidence="1">
    <location>
        <position position="112"/>
    </location>
    <ligand>
        <name>substrate</name>
    </ligand>
</feature>
<feature type="binding site" evidence="1">
    <location>
        <position position="189"/>
    </location>
    <ligand>
        <name>substrate</name>
    </ligand>
</feature>
<feature type="site" description="Important for catalytic activity" evidence="1">
    <location>
        <position position="105"/>
    </location>
</feature>
<feature type="mutagenesis site" description="In ant30-245; loss of activity." evidence="2">
    <original>G</original>
    <variation>D</variation>
    <location>
        <position position="32"/>
    </location>
</feature>
<sequence>MAVSELEVDGVVFPPLARPPGSAHAHFLAGAGVRGMEIGGHFIKFTAIGVYLQADAAVSALAAKWAGKPAADLASDAAFFRDVVTGEFEKFTRVTMILPLTGAQYSDKVTENCVAYWKAAGVYTDAEAAAVDKFKEAFGPHSFAPGASILFTHSPAGVLTVAFSKDSSVPESGGVAIENARLCEAVLESIIGEHGVSPAAKLSLANRVAELLKGAAHAGGEPAAEPVPVSV</sequence>
<dbReference type="EC" id="5.5.1.6"/>
<dbReference type="EMBL" id="AF474923">
    <property type="protein sequence ID" value="AAM13449.1"/>
    <property type="molecule type" value="Genomic_DNA"/>
</dbReference>
<dbReference type="SMR" id="Q8S3X0"/>
<dbReference type="OMA" id="CGADSEK"/>
<dbReference type="UniPathway" id="UPA00154"/>
<dbReference type="ExpressionAtlas" id="Q8S3X0">
    <property type="expression patterns" value="baseline and differential"/>
</dbReference>
<dbReference type="GO" id="GO:0045430">
    <property type="term" value="F:chalcone isomerase activity"/>
    <property type="evidence" value="ECO:0007669"/>
    <property type="project" value="UniProtKB-EC"/>
</dbReference>
<dbReference type="GO" id="GO:0009813">
    <property type="term" value="P:flavonoid biosynthetic process"/>
    <property type="evidence" value="ECO:0007669"/>
    <property type="project" value="UniProtKB-UniPathway"/>
</dbReference>
<dbReference type="Gene3D" id="1.10.890.20">
    <property type="match status" value="1"/>
</dbReference>
<dbReference type="Gene3D" id="3.50.70.10">
    <property type="match status" value="1"/>
</dbReference>
<dbReference type="InterPro" id="IPR044164">
    <property type="entry name" value="CFI"/>
</dbReference>
<dbReference type="InterPro" id="IPR016087">
    <property type="entry name" value="Chalcone_isomerase"/>
</dbReference>
<dbReference type="InterPro" id="IPR016088">
    <property type="entry name" value="Chalcone_isomerase_3-sand"/>
</dbReference>
<dbReference type="InterPro" id="IPR016089">
    <property type="entry name" value="Chalcone_isomerase_bundle_sf"/>
</dbReference>
<dbReference type="InterPro" id="IPR036298">
    <property type="entry name" value="Chalcone_isomerase_sf"/>
</dbReference>
<dbReference type="PANTHER" id="PTHR28039:SF8">
    <property type="entry name" value="CHALCONE--FLAVANONE ISOMERASE 1-RELATED"/>
    <property type="match status" value="1"/>
</dbReference>
<dbReference type="PANTHER" id="PTHR28039">
    <property type="entry name" value="CHALCONE--FLAVONONE ISOMERASE 1-RELATED"/>
    <property type="match status" value="1"/>
</dbReference>
<dbReference type="Pfam" id="PF02431">
    <property type="entry name" value="Chalcone"/>
    <property type="match status" value="1"/>
</dbReference>
<dbReference type="SUPFAM" id="SSF54626">
    <property type="entry name" value="Chalcone isomerase"/>
    <property type="match status" value="1"/>
</dbReference>
<comment type="function">
    <text evidence="2">Catalyzes the intramolecular cyclization of bicyclic chalcones into tricyclic (S)-flavanones. Responsible for the isomerization of 4,2',4',6'-tetrahydroxychalcone (also termed chalcone) into naringenin.</text>
</comment>
<comment type="catalytic activity">
    <reaction>
        <text>a chalcone = a flavanone.</text>
        <dbReference type="EC" id="5.5.1.6"/>
    </reaction>
</comment>
<comment type="pathway">
    <text>Secondary metabolite biosynthesis; flavonoid biosynthesis.</text>
</comment>
<comment type="miscellaneous">
    <text>Part of the biosynthetic pathway for all classes of flavonoids, a large class of secondary plant metabolites, many of which are brightly colored.</text>
</comment>
<comment type="similarity">
    <text evidence="3">Belongs to the chalcone isomerase family.</text>
</comment>
<gene>
    <name type="primary">CHI</name>
</gene>
<protein>
    <recommendedName>
        <fullName>Chalcone--flavanone isomerase</fullName>
        <shortName>Chalcone isomerase</shortName>
        <ecNumber>5.5.1.6</ecNumber>
    </recommendedName>
</protein>
<keyword id="KW-0284">Flavonoid biosynthesis</keyword>
<keyword id="KW-0413">Isomerase</keyword>
<name>CFI_HORVU</name>
<accession>Q8S3X0</accession>
<organism>
    <name type="scientific">Hordeum vulgare</name>
    <name type="common">Barley</name>
    <dbReference type="NCBI Taxonomy" id="4513"/>
    <lineage>
        <taxon>Eukaryota</taxon>
        <taxon>Viridiplantae</taxon>
        <taxon>Streptophyta</taxon>
        <taxon>Embryophyta</taxon>
        <taxon>Tracheophyta</taxon>
        <taxon>Spermatophyta</taxon>
        <taxon>Magnoliopsida</taxon>
        <taxon>Liliopsida</taxon>
        <taxon>Poales</taxon>
        <taxon>Poaceae</taxon>
        <taxon>BOP clade</taxon>
        <taxon>Pooideae</taxon>
        <taxon>Triticodae</taxon>
        <taxon>Triticeae</taxon>
        <taxon>Hordeinae</taxon>
        <taxon>Hordeum</taxon>
    </lineage>
</organism>
<proteinExistence type="evidence at protein level"/>
<reference key="1">
    <citation type="journal article" date="2003" name="Gene">
        <title>Chalcone isomerase gene from rice (Oryza sativa) and barley (Hordeum vulgare): physical, genetic and mutation mapping.</title>
        <authorList>
            <person name="Druka A."/>
            <person name="Kudrna D."/>
            <person name="Rostoks N."/>
            <person name="Brueggeman R."/>
            <person name="von Wettstein D."/>
            <person name="Kleinhofs A."/>
        </authorList>
    </citation>
    <scope>NUCLEOTIDE SEQUENCE [GENOMIC DNA]</scope>
    <scope>FUNCTION</scope>
    <scope>MUTAGENESIS OF GLY-32</scope>
    <source>
        <strain>cv. Morex</strain>
    </source>
</reference>